<evidence type="ECO:0000255" key="1">
    <source>
        <dbReference type="HAMAP-Rule" id="MF_00451"/>
    </source>
</evidence>
<keyword id="KW-0067">ATP-binding</keyword>
<keyword id="KW-0963">Cytoplasm</keyword>
<keyword id="KW-0418">Kinase</keyword>
<keyword id="KW-0460">Magnesium</keyword>
<keyword id="KW-0479">Metal-binding</keyword>
<keyword id="KW-0546">Nucleotide metabolism</keyword>
<keyword id="KW-0547">Nucleotide-binding</keyword>
<keyword id="KW-0597">Phosphoprotein</keyword>
<keyword id="KW-1185">Reference proteome</keyword>
<keyword id="KW-0808">Transferase</keyword>
<proteinExistence type="inferred from homology"/>
<comment type="function">
    <text evidence="1">Major role in the synthesis of nucleoside triphosphates other than ATP. The ATP gamma phosphate is transferred to the NDP beta phosphate via a ping-pong mechanism, using a phosphorylated active-site intermediate.</text>
</comment>
<comment type="catalytic activity">
    <reaction evidence="1">
        <text>a 2'-deoxyribonucleoside 5'-diphosphate + ATP = a 2'-deoxyribonucleoside 5'-triphosphate + ADP</text>
        <dbReference type="Rhea" id="RHEA:44640"/>
        <dbReference type="ChEBI" id="CHEBI:30616"/>
        <dbReference type="ChEBI" id="CHEBI:61560"/>
        <dbReference type="ChEBI" id="CHEBI:73316"/>
        <dbReference type="ChEBI" id="CHEBI:456216"/>
        <dbReference type="EC" id="2.7.4.6"/>
    </reaction>
</comment>
<comment type="catalytic activity">
    <reaction evidence="1">
        <text>a ribonucleoside 5'-diphosphate + ATP = a ribonucleoside 5'-triphosphate + ADP</text>
        <dbReference type="Rhea" id="RHEA:18113"/>
        <dbReference type="ChEBI" id="CHEBI:30616"/>
        <dbReference type="ChEBI" id="CHEBI:57930"/>
        <dbReference type="ChEBI" id="CHEBI:61557"/>
        <dbReference type="ChEBI" id="CHEBI:456216"/>
        <dbReference type="EC" id="2.7.4.6"/>
    </reaction>
</comment>
<comment type="cofactor">
    <cofactor evidence="1">
        <name>Mg(2+)</name>
        <dbReference type="ChEBI" id="CHEBI:18420"/>
    </cofactor>
</comment>
<comment type="subunit">
    <text evidence="1">Homotetramer.</text>
</comment>
<comment type="subcellular location">
    <subcellularLocation>
        <location evidence="1">Cytoplasm</location>
    </subcellularLocation>
</comment>
<comment type="similarity">
    <text evidence="1">Belongs to the NDK family.</text>
</comment>
<protein>
    <recommendedName>
        <fullName evidence="1">Nucleoside diphosphate kinase</fullName>
        <shortName evidence="1">NDK</shortName>
        <shortName evidence="1">NDP kinase</shortName>
        <ecNumber evidence="1">2.7.4.6</ecNumber>
    </recommendedName>
    <alternativeName>
        <fullName evidence="1">Nucleoside-2-P kinase</fullName>
    </alternativeName>
</protein>
<name>NDK_MYCMM</name>
<sequence length="136" mass="14697">MTERTLVLIKPDGVQRQLVGEIISRIERKGLAIAALELRNVTEELASQHYAEHEGKPFFGSLLEFITSAPVVAAIVEGPRAIAAFRQLAGGTDPVEKATPGTIRGDFGLETQFNLVHGSDSAESAQREIALWFPSA</sequence>
<dbReference type="EC" id="2.7.4.6" evidence="1"/>
<dbReference type="EMBL" id="CP000854">
    <property type="protein sequence ID" value="ACC42185.1"/>
    <property type="molecule type" value="Genomic_DNA"/>
</dbReference>
<dbReference type="RefSeq" id="WP_012395377.1">
    <property type="nucleotide sequence ID" value="NC_010612.1"/>
</dbReference>
<dbReference type="SMR" id="B2HMG5"/>
<dbReference type="STRING" id="216594.MMAR_3769"/>
<dbReference type="GeneID" id="34341811"/>
<dbReference type="GeneID" id="93438114"/>
<dbReference type="KEGG" id="mmi:MMAR_3769"/>
<dbReference type="eggNOG" id="COG0105">
    <property type="taxonomic scope" value="Bacteria"/>
</dbReference>
<dbReference type="HOGENOM" id="CLU_060216_6_3_11"/>
<dbReference type="OrthoDB" id="9801161at2"/>
<dbReference type="Proteomes" id="UP000001190">
    <property type="component" value="Chromosome"/>
</dbReference>
<dbReference type="GO" id="GO:0005737">
    <property type="term" value="C:cytoplasm"/>
    <property type="evidence" value="ECO:0007669"/>
    <property type="project" value="UniProtKB-SubCell"/>
</dbReference>
<dbReference type="GO" id="GO:0005524">
    <property type="term" value="F:ATP binding"/>
    <property type="evidence" value="ECO:0007669"/>
    <property type="project" value="UniProtKB-UniRule"/>
</dbReference>
<dbReference type="GO" id="GO:0046872">
    <property type="term" value="F:metal ion binding"/>
    <property type="evidence" value="ECO:0007669"/>
    <property type="project" value="UniProtKB-KW"/>
</dbReference>
<dbReference type="GO" id="GO:0004550">
    <property type="term" value="F:nucleoside diphosphate kinase activity"/>
    <property type="evidence" value="ECO:0007669"/>
    <property type="project" value="UniProtKB-UniRule"/>
</dbReference>
<dbReference type="GO" id="GO:0006241">
    <property type="term" value="P:CTP biosynthetic process"/>
    <property type="evidence" value="ECO:0007669"/>
    <property type="project" value="UniProtKB-UniRule"/>
</dbReference>
<dbReference type="GO" id="GO:0006183">
    <property type="term" value="P:GTP biosynthetic process"/>
    <property type="evidence" value="ECO:0007669"/>
    <property type="project" value="UniProtKB-UniRule"/>
</dbReference>
<dbReference type="GO" id="GO:0006228">
    <property type="term" value="P:UTP biosynthetic process"/>
    <property type="evidence" value="ECO:0007669"/>
    <property type="project" value="UniProtKB-UniRule"/>
</dbReference>
<dbReference type="CDD" id="cd04413">
    <property type="entry name" value="NDPk_I"/>
    <property type="match status" value="1"/>
</dbReference>
<dbReference type="FunFam" id="3.30.70.141:FF:000003">
    <property type="entry name" value="Nucleoside diphosphate kinase"/>
    <property type="match status" value="1"/>
</dbReference>
<dbReference type="Gene3D" id="3.30.70.141">
    <property type="entry name" value="Nucleoside diphosphate kinase-like domain"/>
    <property type="match status" value="1"/>
</dbReference>
<dbReference type="HAMAP" id="MF_00451">
    <property type="entry name" value="NDP_kinase"/>
    <property type="match status" value="1"/>
</dbReference>
<dbReference type="InterPro" id="IPR034907">
    <property type="entry name" value="NDK-like_dom"/>
</dbReference>
<dbReference type="InterPro" id="IPR036850">
    <property type="entry name" value="NDK-like_dom_sf"/>
</dbReference>
<dbReference type="InterPro" id="IPR001564">
    <property type="entry name" value="Nucleoside_diP_kinase"/>
</dbReference>
<dbReference type="NCBIfam" id="NF001908">
    <property type="entry name" value="PRK00668.1"/>
    <property type="match status" value="1"/>
</dbReference>
<dbReference type="PANTHER" id="PTHR11349">
    <property type="entry name" value="NUCLEOSIDE DIPHOSPHATE KINASE"/>
    <property type="match status" value="1"/>
</dbReference>
<dbReference type="Pfam" id="PF00334">
    <property type="entry name" value="NDK"/>
    <property type="match status" value="1"/>
</dbReference>
<dbReference type="PRINTS" id="PR01243">
    <property type="entry name" value="NUCDPKINASE"/>
</dbReference>
<dbReference type="SMART" id="SM00562">
    <property type="entry name" value="NDK"/>
    <property type="match status" value="1"/>
</dbReference>
<dbReference type="SUPFAM" id="SSF54919">
    <property type="entry name" value="Nucleoside diphosphate kinase, NDK"/>
    <property type="match status" value="1"/>
</dbReference>
<dbReference type="PROSITE" id="PS51374">
    <property type="entry name" value="NDPK_LIKE"/>
    <property type="match status" value="1"/>
</dbReference>
<gene>
    <name evidence="1" type="primary">ndk</name>
    <name type="ordered locus">MMAR_3769</name>
</gene>
<accession>B2HMG5</accession>
<feature type="chain" id="PRO_1000192277" description="Nucleoside diphosphate kinase">
    <location>
        <begin position="1"/>
        <end position="136"/>
    </location>
</feature>
<feature type="active site" description="Pros-phosphohistidine intermediate" evidence="1">
    <location>
        <position position="117"/>
    </location>
</feature>
<feature type="binding site" evidence="1">
    <location>
        <position position="10"/>
    </location>
    <ligand>
        <name>ATP</name>
        <dbReference type="ChEBI" id="CHEBI:30616"/>
    </ligand>
</feature>
<feature type="binding site" evidence="1">
    <location>
        <position position="58"/>
    </location>
    <ligand>
        <name>ATP</name>
        <dbReference type="ChEBI" id="CHEBI:30616"/>
    </ligand>
</feature>
<feature type="binding site" evidence="1">
    <location>
        <position position="86"/>
    </location>
    <ligand>
        <name>ATP</name>
        <dbReference type="ChEBI" id="CHEBI:30616"/>
    </ligand>
</feature>
<feature type="binding site" evidence="1">
    <location>
        <position position="92"/>
    </location>
    <ligand>
        <name>ATP</name>
        <dbReference type="ChEBI" id="CHEBI:30616"/>
    </ligand>
</feature>
<feature type="binding site" evidence="1">
    <location>
        <position position="104"/>
    </location>
    <ligand>
        <name>ATP</name>
        <dbReference type="ChEBI" id="CHEBI:30616"/>
    </ligand>
</feature>
<feature type="binding site" evidence="1">
    <location>
        <position position="114"/>
    </location>
    <ligand>
        <name>ATP</name>
        <dbReference type="ChEBI" id="CHEBI:30616"/>
    </ligand>
</feature>
<reference key="1">
    <citation type="journal article" date="2008" name="Genome Res.">
        <title>Insights from the complete genome sequence of Mycobacterium marinum on the evolution of Mycobacterium tuberculosis.</title>
        <authorList>
            <person name="Stinear T.P."/>
            <person name="Seemann T."/>
            <person name="Harrison P.F."/>
            <person name="Jenkin G.A."/>
            <person name="Davies J.K."/>
            <person name="Johnson P.D."/>
            <person name="Abdellah Z."/>
            <person name="Arrowsmith C."/>
            <person name="Chillingworth T."/>
            <person name="Churcher C."/>
            <person name="Clarke K."/>
            <person name="Cronin A."/>
            <person name="Davis P."/>
            <person name="Goodhead I."/>
            <person name="Holroyd N."/>
            <person name="Jagels K."/>
            <person name="Lord A."/>
            <person name="Moule S."/>
            <person name="Mungall K."/>
            <person name="Norbertczak H."/>
            <person name="Quail M.A."/>
            <person name="Rabbinowitsch E."/>
            <person name="Walker D."/>
            <person name="White B."/>
            <person name="Whitehead S."/>
            <person name="Small P.L."/>
            <person name="Brosch R."/>
            <person name="Ramakrishnan L."/>
            <person name="Fischbach M.A."/>
            <person name="Parkhill J."/>
            <person name="Cole S.T."/>
        </authorList>
    </citation>
    <scope>NUCLEOTIDE SEQUENCE [LARGE SCALE GENOMIC DNA]</scope>
    <source>
        <strain>ATCC BAA-535 / M</strain>
    </source>
</reference>
<organism>
    <name type="scientific">Mycobacterium marinum (strain ATCC BAA-535 / M)</name>
    <dbReference type="NCBI Taxonomy" id="216594"/>
    <lineage>
        <taxon>Bacteria</taxon>
        <taxon>Bacillati</taxon>
        <taxon>Actinomycetota</taxon>
        <taxon>Actinomycetes</taxon>
        <taxon>Mycobacteriales</taxon>
        <taxon>Mycobacteriaceae</taxon>
        <taxon>Mycobacterium</taxon>
        <taxon>Mycobacterium ulcerans group</taxon>
    </lineage>
</organism>